<name>NADK_KLEP7</name>
<feature type="chain" id="PRO_1000079499" description="NAD kinase">
    <location>
        <begin position="1"/>
        <end position="292"/>
    </location>
</feature>
<feature type="active site" description="Proton acceptor" evidence="1">
    <location>
        <position position="73"/>
    </location>
</feature>
<feature type="binding site" evidence="1">
    <location>
        <begin position="73"/>
        <end position="74"/>
    </location>
    <ligand>
        <name>NAD(+)</name>
        <dbReference type="ChEBI" id="CHEBI:57540"/>
    </ligand>
</feature>
<feature type="binding site" evidence="1">
    <location>
        <begin position="147"/>
        <end position="148"/>
    </location>
    <ligand>
        <name>NAD(+)</name>
        <dbReference type="ChEBI" id="CHEBI:57540"/>
    </ligand>
</feature>
<feature type="binding site" evidence="1">
    <location>
        <position position="158"/>
    </location>
    <ligand>
        <name>NAD(+)</name>
        <dbReference type="ChEBI" id="CHEBI:57540"/>
    </ligand>
</feature>
<feature type="binding site" evidence="1">
    <location>
        <position position="175"/>
    </location>
    <ligand>
        <name>NAD(+)</name>
        <dbReference type="ChEBI" id="CHEBI:57540"/>
    </ligand>
</feature>
<feature type="binding site" evidence="1">
    <location>
        <position position="177"/>
    </location>
    <ligand>
        <name>NAD(+)</name>
        <dbReference type="ChEBI" id="CHEBI:57540"/>
    </ligand>
</feature>
<feature type="binding site" evidence="1">
    <location>
        <begin position="188"/>
        <end position="193"/>
    </location>
    <ligand>
        <name>NAD(+)</name>
        <dbReference type="ChEBI" id="CHEBI:57540"/>
    </ligand>
</feature>
<feature type="binding site" evidence="1">
    <location>
        <position position="247"/>
    </location>
    <ligand>
        <name>NAD(+)</name>
        <dbReference type="ChEBI" id="CHEBI:57540"/>
    </ligand>
</feature>
<keyword id="KW-0067">ATP-binding</keyword>
<keyword id="KW-0963">Cytoplasm</keyword>
<keyword id="KW-0418">Kinase</keyword>
<keyword id="KW-0520">NAD</keyword>
<keyword id="KW-0521">NADP</keyword>
<keyword id="KW-0547">Nucleotide-binding</keyword>
<keyword id="KW-0808">Transferase</keyword>
<sequence>MKNHFKCIGIVGHPRHPTALTTHEMLWRWLCSKGYEVLVEQQIAHELQLSNVKTGTLAEIGQQADLAVVVGGDGNMLGAARTLARYDINVIGINRGNLGFLTDLDPDNALQQLADVLEGHYIAEKRFLLEAQVCQQDCQKRISTAINEVVLHPGKVAHMIEFEVYIDEVFAFSQRSDGLIISTPTGSTAYSLSAGGPILTPSLDAITLVPMFPHTLSARPLVINGDSTIRLRFSHRCSDLEISCDSQIALPIQDGEDVLIRRCDYHLNLIHPKDYSYFNTLSTKLGWSKKLF</sequence>
<comment type="function">
    <text evidence="1">Involved in the regulation of the intracellular balance of NAD and NADP, and is a key enzyme in the biosynthesis of NADP. Catalyzes specifically the phosphorylation on 2'-hydroxyl of the adenosine moiety of NAD to yield NADP.</text>
</comment>
<comment type="catalytic activity">
    <reaction evidence="1">
        <text>NAD(+) + ATP = ADP + NADP(+) + H(+)</text>
        <dbReference type="Rhea" id="RHEA:18629"/>
        <dbReference type="ChEBI" id="CHEBI:15378"/>
        <dbReference type="ChEBI" id="CHEBI:30616"/>
        <dbReference type="ChEBI" id="CHEBI:57540"/>
        <dbReference type="ChEBI" id="CHEBI:58349"/>
        <dbReference type="ChEBI" id="CHEBI:456216"/>
        <dbReference type="EC" id="2.7.1.23"/>
    </reaction>
</comment>
<comment type="cofactor">
    <cofactor evidence="1">
        <name>a divalent metal cation</name>
        <dbReference type="ChEBI" id="CHEBI:60240"/>
    </cofactor>
</comment>
<comment type="subcellular location">
    <subcellularLocation>
        <location evidence="1">Cytoplasm</location>
    </subcellularLocation>
</comment>
<comment type="similarity">
    <text evidence="1">Belongs to the NAD kinase family.</text>
</comment>
<evidence type="ECO:0000255" key="1">
    <source>
        <dbReference type="HAMAP-Rule" id="MF_00361"/>
    </source>
</evidence>
<gene>
    <name evidence="1" type="primary">nadK</name>
    <name type="ordered locus">KPN78578_28820</name>
    <name type="ORF">KPN_02937</name>
</gene>
<dbReference type="EC" id="2.7.1.23" evidence="1"/>
<dbReference type="EMBL" id="CP000647">
    <property type="protein sequence ID" value="ABR78343.1"/>
    <property type="molecule type" value="Genomic_DNA"/>
</dbReference>
<dbReference type="RefSeq" id="WP_002914158.1">
    <property type="nucleotide sequence ID" value="NC_009648.1"/>
</dbReference>
<dbReference type="SMR" id="A6TCM2"/>
<dbReference type="STRING" id="272620.KPN_02937"/>
<dbReference type="PaxDb" id="272620-KPN_02937"/>
<dbReference type="EnsemblBacteria" id="ABR78343">
    <property type="protein sequence ID" value="ABR78343"/>
    <property type="gene ID" value="KPN_02937"/>
</dbReference>
<dbReference type="GeneID" id="93271799"/>
<dbReference type="KEGG" id="kpn:KPN_02937"/>
<dbReference type="HOGENOM" id="CLU_008831_0_1_6"/>
<dbReference type="Proteomes" id="UP000000265">
    <property type="component" value="Chromosome"/>
</dbReference>
<dbReference type="GO" id="GO:0005737">
    <property type="term" value="C:cytoplasm"/>
    <property type="evidence" value="ECO:0007669"/>
    <property type="project" value="UniProtKB-SubCell"/>
</dbReference>
<dbReference type="GO" id="GO:0005524">
    <property type="term" value="F:ATP binding"/>
    <property type="evidence" value="ECO:0007669"/>
    <property type="project" value="UniProtKB-KW"/>
</dbReference>
<dbReference type="GO" id="GO:0046872">
    <property type="term" value="F:metal ion binding"/>
    <property type="evidence" value="ECO:0007669"/>
    <property type="project" value="UniProtKB-UniRule"/>
</dbReference>
<dbReference type="GO" id="GO:0051287">
    <property type="term" value="F:NAD binding"/>
    <property type="evidence" value="ECO:0007669"/>
    <property type="project" value="UniProtKB-ARBA"/>
</dbReference>
<dbReference type="GO" id="GO:0003951">
    <property type="term" value="F:NAD+ kinase activity"/>
    <property type="evidence" value="ECO:0007669"/>
    <property type="project" value="UniProtKB-UniRule"/>
</dbReference>
<dbReference type="GO" id="GO:0019674">
    <property type="term" value="P:NAD metabolic process"/>
    <property type="evidence" value="ECO:0007669"/>
    <property type="project" value="InterPro"/>
</dbReference>
<dbReference type="GO" id="GO:0006741">
    <property type="term" value="P:NADP biosynthetic process"/>
    <property type="evidence" value="ECO:0007669"/>
    <property type="project" value="UniProtKB-UniRule"/>
</dbReference>
<dbReference type="FunFam" id="2.60.200.30:FF:000001">
    <property type="entry name" value="NAD kinase"/>
    <property type="match status" value="1"/>
</dbReference>
<dbReference type="FunFam" id="3.40.50.10330:FF:000004">
    <property type="entry name" value="NAD kinase"/>
    <property type="match status" value="1"/>
</dbReference>
<dbReference type="Gene3D" id="3.40.50.10330">
    <property type="entry name" value="Probable inorganic polyphosphate/atp-NAD kinase, domain 1"/>
    <property type="match status" value="1"/>
</dbReference>
<dbReference type="Gene3D" id="2.60.200.30">
    <property type="entry name" value="Probable inorganic polyphosphate/atp-NAD kinase, domain 2"/>
    <property type="match status" value="1"/>
</dbReference>
<dbReference type="HAMAP" id="MF_00361">
    <property type="entry name" value="NAD_kinase"/>
    <property type="match status" value="1"/>
</dbReference>
<dbReference type="InterPro" id="IPR017438">
    <property type="entry name" value="ATP-NAD_kinase_N"/>
</dbReference>
<dbReference type="InterPro" id="IPR017437">
    <property type="entry name" value="ATP-NAD_kinase_PpnK-typ_C"/>
</dbReference>
<dbReference type="InterPro" id="IPR016064">
    <property type="entry name" value="NAD/diacylglycerol_kinase_sf"/>
</dbReference>
<dbReference type="InterPro" id="IPR002504">
    <property type="entry name" value="NADK"/>
</dbReference>
<dbReference type="NCBIfam" id="NF002306">
    <property type="entry name" value="PRK01231.1"/>
    <property type="match status" value="1"/>
</dbReference>
<dbReference type="NCBIfam" id="NF002893">
    <property type="entry name" value="PRK03378.1"/>
    <property type="match status" value="1"/>
</dbReference>
<dbReference type="PANTHER" id="PTHR20275">
    <property type="entry name" value="NAD KINASE"/>
    <property type="match status" value="1"/>
</dbReference>
<dbReference type="PANTHER" id="PTHR20275:SF0">
    <property type="entry name" value="NAD KINASE"/>
    <property type="match status" value="1"/>
</dbReference>
<dbReference type="Pfam" id="PF01513">
    <property type="entry name" value="NAD_kinase"/>
    <property type="match status" value="1"/>
</dbReference>
<dbReference type="Pfam" id="PF20143">
    <property type="entry name" value="NAD_kinase_C"/>
    <property type="match status" value="1"/>
</dbReference>
<dbReference type="SUPFAM" id="SSF111331">
    <property type="entry name" value="NAD kinase/diacylglycerol kinase-like"/>
    <property type="match status" value="1"/>
</dbReference>
<organism>
    <name type="scientific">Klebsiella pneumoniae subsp. pneumoniae (strain ATCC 700721 / MGH 78578)</name>
    <dbReference type="NCBI Taxonomy" id="272620"/>
    <lineage>
        <taxon>Bacteria</taxon>
        <taxon>Pseudomonadati</taxon>
        <taxon>Pseudomonadota</taxon>
        <taxon>Gammaproteobacteria</taxon>
        <taxon>Enterobacterales</taxon>
        <taxon>Enterobacteriaceae</taxon>
        <taxon>Klebsiella/Raoultella group</taxon>
        <taxon>Klebsiella</taxon>
        <taxon>Klebsiella pneumoniae complex</taxon>
    </lineage>
</organism>
<accession>A6TCM2</accession>
<reference key="1">
    <citation type="submission" date="2006-09" db="EMBL/GenBank/DDBJ databases">
        <authorList>
            <consortium name="The Klebsiella pneumonia Genome Sequencing Project"/>
            <person name="McClelland M."/>
            <person name="Sanderson E.K."/>
            <person name="Spieth J."/>
            <person name="Clifton W.S."/>
            <person name="Latreille P."/>
            <person name="Sabo A."/>
            <person name="Pepin K."/>
            <person name="Bhonagiri V."/>
            <person name="Porwollik S."/>
            <person name="Ali J."/>
            <person name="Wilson R.K."/>
        </authorList>
    </citation>
    <scope>NUCLEOTIDE SEQUENCE [LARGE SCALE GENOMIC DNA]</scope>
    <source>
        <strain>ATCC 700721 / MGH 78578</strain>
    </source>
</reference>
<protein>
    <recommendedName>
        <fullName evidence="1">NAD kinase</fullName>
        <ecNumber evidence="1">2.7.1.23</ecNumber>
    </recommendedName>
    <alternativeName>
        <fullName evidence="1">ATP-dependent NAD kinase</fullName>
    </alternativeName>
</protein>
<proteinExistence type="inferred from homology"/>